<evidence type="ECO:0000255" key="1">
    <source>
        <dbReference type="HAMAP-Rule" id="MF_01554"/>
    </source>
</evidence>
<protein>
    <recommendedName>
        <fullName evidence="1">Phosphoglucosamine mutase</fullName>
        <ecNumber evidence="1">5.4.2.10</ecNumber>
    </recommendedName>
</protein>
<name>GLMM_CLOBA</name>
<gene>
    <name evidence="1" type="primary">glmM</name>
    <name type="ordered locus">CLH_0300</name>
</gene>
<reference key="1">
    <citation type="submission" date="2008-05" db="EMBL/GenBank/DDBJ databases">
        <title>Complete genome sequence of Clostridium botulinum E3 str. Alaska E43.</title>
        <authorList>
            <person name="Brinkac L.M."/>
            <person name="Brown J.L."/>
            <person name="Bruce D."/>
            <person name="Detter C."/>
            <person name="Munk C."/>
            <person name="Smith L.A."/>
            <person name="Smith T.J."/>
            <person name="Sutton G."/>
            <person name="Brettin T.S."/>
        </authorList>
    </citation>
    <scope>NUCLEOTIDE SEQUENCE [LARGE SCALE GENOMIC DNA]</scope>
    <source>
        <strain>Alaska E43 / Type E3</strain>
    </source>
</reference>
<comment type="function">
    <text evidence="1">Catalyzes the conversion of glucosamine-6-phosphate to glucosamine-1-phosphate.</text>
</comment>
<comment type="catalytic activity">
    <reaction evidence="1">
        <text>alpha-D-glucosamine 1-phosphate = D-glucosamine 6-phosphate</text>
        <dbReference type="Rhea" id="RHEA:23424"/>
        <dbReference type="ChEBI" id="CHEBI:58516"/>
        <dbReference type="ChEBI" id="CHEBI:58725"/>
        <dbReference type="EC" id="5.4.2.10"/>
    </reaction>
</comment>
<comment type="cofactor">
    <cofactor evidence="1">
        <name>Mg(2+)</name>
        <dbReference type="ChEBI" id="CHEBI:18420"/>
    </cofactor>
    <text evidence="1">Binds 1 Mg(2+) ion per subunit.</text>
</comment>
<comment type="PTM">
    <text evidence="1">Activated by phosphorylation.</text>
</comment>
<comment type="similarity">
    <text evidence="1">Belongs to the phosphohexose mutase family.</text>
</comment>
<feature type="chain" id="PRO_1000201075" description="Phosphoglucosamine mutase">
    <location>
        <begin position="1"/>
        <end position="447"/>
    </location>
</feature>
<feature type="active site" description="Phosphoserine intermediate" evidence="1">
    <location>
        <position position="100"/>
    </location>
</feature>
<feature type="binding site" description="via phosphate group" evidence="1">
    <location>
        <position position="100"/>
    </location>
    <ligand>
        <name>Mg(2+)</name>
        <dbReference type="ChEBI" id="CHEBI:18420"/>
    </ligand>
</feature>
<feature type="binding site" evidence="1">
    <location>
        <position position="240"/>
    </location>
    <ligand>
        <name>Mg(2+)</name>
        <dbReference type="ChEBI" id="CHEBI:18420"/>
    </ligand>
</feature>
<feature type="binding site" evidence="1">
    <location>
        <position position="242"/>
    </location>
    <ligand>
        <name>Mg(2+)</name>
        <dbReference type="ChEBI" id="CHEBI:18420"/>
    </ligand>
</feature>
<feature type="binding site" evidence="1">
    <location>
        <position position="244"/>
    </location>
    <ligand>
        <name>Mg(2+)</name>
        <dbReference type="ChEBI" id="CHEBI:18420"/>
    </ligand>
</feature>
<feature type="modified residue" description="Phosphoserine" evidence="1">
    <location>
        <position position="100"/>
    </location>
</feature>
<dbReference type="EC" id="5.4.2.10" evidence="1"/>
<dbReference type="EMBL" id="CP001078">
    <property type="protein sequence ID" value="ACD52376.1"/>
    <property type="molecule type" value="Genomic_DNA"/>
</dbReference>
<dbReference type="RefSeq" id="WP_012450532.1">
    <property type="nucleotide sequence ID" value="NC_010723.1"/>
</dbReference>
<dbReference type="SMR" id="B2UYH3"/>
<dbReference type="KEGG" id="cbt:CLH_0300"/>
<dbReference type="HOGENOM" id="CLU_016950_7_0_9"/>
<dbReference type="GO" id="GO:0005829">
    <property type="term" value="C:cytosol"/>
    <property type="evidence" value="ECO:0007669"/>
    <property type="project" value="TreeGrafter"/>
</dbReference>
<dbReference type="GO" id="GO:0000287">
    <property type="term" value="F:magnesium ion binding"/>
    <property type="evidence" value="ECO:0007669"/>
    <property type="project" value="UniProtKB-UniRule"/>
</dbReference>
<dbReference type="GO" id="GO:0008966">
    <property type="term" value="F:phosphoglucosamine mutase activity"/>
    <property type="evidence" value="ECO:0007669"/>
    <property type="project" value="UniProtKB-UniRule"/>
</dbReference>
<dbReference type="GO" id="GO:0004615">
    <property type="term" value="F:phosphomannomutase activity"/>
    <property type="evidence" value="ECO:0007669"/>
    <property type="project" value="TreeGrafter"/>
</dbReference>
<dbReference type="GO" id="GO:0005975">
    <property type="term" value="P:carbohydrate metabolic process"/>
    <property type="evidence" value="ECO:0007669"/>
    <property type="project" value="InterPro"/>
</dbReference>
<dbReference type="GO" id="GO:0009252">
    <property type="term" value="P:peptidoglycan biosynthetic process"/>
    <property type="evidence" value="ECO:0007669"/>
    <property type="project" value="TreeGrafter"/>
</dbReference>
<dbReference type="GO" id="GO:0006048">
    <property type="term" value="P:UDP-N-acetylglucosamine biosynthetic process"/>
    <property type="evidence" value="ECO:0007669"/>
    <property type="project" value="TreeGrafter"/>
</dbReference>
<dbReference type="CDD" id="cd05802">
    <property type="entry name" value="GlmM"/>
    <property type="match status" value="1"/>
</dbReference>
<dbReference type="FunFam" id="3.30.310.50:FF:000001">
    <property type="entry name" value="Phosphoglucosamine mutase"/>
    <property type="match status" value="1"/>
</dbReference>
<dbReference type="FunFam" id="3.40.120.10:FF:000001">
    <property type="entry name" value="Phosphoglucosamine mutase"/>
    <property type="match status" value="1"/>
</dbReference>
<dbReference type="FunFam" id="3.40.120.10:FF:000003">
    <property type="entry name" value="Phosphoglucosamine mutase"/>
    <property type="match status" value="1"/>
</dbReference>
<dbReference type="Gene3D" id="3.40.120.10">
    <property type="entry name" value="Alpha-D-Glucose-1,6-Bisphosphate, subunit A, domain 3"/>
    <property type="match status" value="3"/>
</dbReference>
<dbReference type="Gene3D" id="3.30.310.50">
    <property type="entry name" value="Alpha-D-phosphohexomutase, C-terminal domain"/>
    <property type="match status" value="1"/>
</dbReference>
<dbReference type="HAMAP" id="MF_01554_B">
    <property type="entry name" value="GlmM_B"/>
    <property type="match status" value="1"/>
</dbReference>
<dbReference type="InterPro" id="IPR005844">
    <property type="entry name" value="A-D-PHexomutase_a/b/a-I"/>
</dbReference>
<dbReference type="InterPro" id="IPR016055">
    <property type="entry name" value="A-D-PHexomutase_a/b/a-I/II/III"/>
</dbReference>
<dbReference type="InterPro" id="IPR005845">
    <property type="entry name" value="A-D-PHexomutase_a/b/a-II"/>
</dbReference>
<dbReference type="InterPro" id="IPR005846">
    <property type="entry name" value="A-D-PHexomutase_a/b/a-III"/>
</dbReference>
<dbReference type="InterPro" id="IPR005843">
    <property type="entry name" value="A-D-PHexomutase_C"/>
</dbReference>
<dbReference type="InterPro" id="IPR036900">
    <property type="entry name" value="A-D-PHexomutase_C_sf"/>
</dbReference>
<dbReference type="InterPro" id="IPR016066">
    <property type="entry name" value="A-D-PHexomutase_CS"/>
</dbReference>
<dbReference type="InterPro" id="IPR005841">
    <property type="entry name" value="Alpha-D-phosphohexomutase_SF"/>
</dbReference>
<dbReference type="InterPro" id="IPR006352">
    <property type="entry name" value="GlmM_bact"/>
</dbReference>
<dbReference type="InterPro" id="IPR050060">
    <property type="entry name" value="Phosphoglucosamine_mutase"/>
</dbReference>
<dbReference type="NCBIfam" id="TIGR01455">
    <property type="entry name" value="glmM"/>
    <property type="match status" value="1"/>
</dbReference>
<dbReference type="NCBIfam" id="NF008139">
    <property type="entry name" value="PRK10887.1"/>
    <property type="match status" value="1"/>
</dbReference>
<dbReference type="PANTHER" id="PTHR42946:SF1">
    <property type="entry name" value="PHOSPHOGLUCOMUTASE (ALPHA-D-GLUCOSE-1,6-BISPHOSPHATE-DEPENDENT)"/>
    <property type="match status" value="1"/>
</dbReference>
<dbReference type="PANTHER" id="PTHR42946">
    <property type="entry name" value="PHOSPHOHEXOSE MUTASE"/>
    <property type="match status" value="1"/>
</dbReference>
<dbReference type="Pfam" id="PF02878">
    <property type="entry name" value="PGM_PMM_I"/>
    <property type="match status" value="1"/>
</dbReference>
<dbReference type="Pfam" id="PF02879">
    <property type="entry name" value="PGM_PMM_II"/>
    <property type="match status" value="1"/>
</dbReference>
<dbReference type="Pfam" id="PF02880">
    <property type="entry name" value="PGM_PMM_III"/>
    <property type="match status" value="1"/>
</dbReference>
<dbReference type="Pfam" id="PF00408">
    <property type="entry name" value="PGM_PMM_IV"/>
    <property type="match status" value="1"/>
</dbReference>
<dbReference type="PRINTS" id="PR00509">
    <property type="entry name" value="PGMPMM"/>
</dbReference>
<dbReference type="SUPFAM" id="SSF55957">
    <property type="entry name" value="Phosphoglucomutase, C-terminal domain"/>
    <property type="match status" value="1"/>
</dbReference>
<dbReference type="SUPFAM" id="SSF53738">
    <property type="entry name" value="Phosphoglucomutase, first 3 domains"/>
    <property type="match status" value="3"/>
</dbReference>
<dbReference type="PROSITE" id="PS00710">
    <property type="entry name" value="PGM_PMM"/>
    <property type="match status" value="1"/>
</dbReference>
<accession>B2UYH3</accession>
<keyword id="KW-0413">Isomerase</keyword>
<keyword id="KW-0460">Magnesium</keyword>
<keyword id="KW-0479">Metal-binding</keyword>
<keyword id="KW-0597">Phosphoprotein</keyword>
<organism>
    <name type="scientific">Clostridium botulinum (strain Alaska E43 / Type E3)</name>
    <dbReference type="NCBI Taxonomy" id="508767"/>
    <lineage>
        <taxon>Bacteria</taxon>
        <taxon>Bacillati</taxon>
        <taxon>Bacillota</taxon>
        <taxon>Clostridia</taxon>
        <taxon>Eubacteriales</taxon>
        <taxon>Clostridiaceae</taxon>
        <taxon>Clostridium</taxon>
    </lineage>
</organism>
<sequence>MDRMFGTDGVRGIANTELTAQMAYNLGRAGAYVLTEGAHKPKILVAKDTRISGDMLESALVAGILSVGAEAVILGVVPTPAVAYLTREYNADAGVMISASHNPVEYNGIKFFNNKGYKLSDELEDGIQKVIESDFEGVPSPIGIDLGRERIEVAALEDYTEFAKQTIPYNLKGMKIALDCANGASYKSAVKAFRDLGADVFVINDNPDGTNINKNCGSTHPEELMDYVVKKGCDLGFAFDGDADRCLAVDENGKLINGDFILMLCANYLKEIGKLKDDTLVVTVMSNLGLDIACRGLGIKLEKTKVGDRYVLEEMTKDNYVLGGEQSGHVIFLDYNTTGDGLVTALQVASIVKKKEKTLSELCSVMKELPQVLVNATVPNDKKNIYLEDAEIVEAIKEIEAKLNGVGRVLIRPSGTEPLVRVMLEGENQVEIDEMAHGLANLILSKI</sequence>
<proteinExistence type="inferred from homology"/>